<proteinExistence type="evidence at protein level"/>
<evidence type="ECO:0000256" key="1">
    <source>
        <dbReference type="SAM" id="MobiDB-lite"/>
    </source>
</evidence>
<evidence type="ECO:0000269" key="2">
    <source>
    </source>
</evidence>
<evidence type="ECO:0000303" key="3">
    <source>
    </source>
</evidence>
<evidence type="ECO:0000305" key="4"/>
<evidence type="ECO:0000312" key="5">
    <source>
        <dbReference type="EMBL" id="AQY56563.1"/>
    </source>
</evidence>
<evidence type="ECO:0000312" key="6">
    <source>
        <dbReference type="EMBL" id="BAS89006.1"/>
    </source>
</evidence>
<evidence type="ECO:0000312" key="7">
    <source>
        <dbReference type="EMBL" id="CAD40774.1"/>
    </source>
</evidence>
<evidence type="ECO:0000312" key="8">
    <source>
        <dbReference type="EMBL" id="CAE05145.2"/>
    </source>
</evidence>
<dbReference type="EMBL" id="AB669025">
    <property type="protein sequence ID" value="BAL03066.1"/>
    <property type="molecule type" value="mRNA"/>
</dbReference>
<dbReference type="EMBL" id="KY673700">
    <property type="protein sequence ID" value="AQY56563.1"/>
    <property type="molecule type" value="mRNA"/>
</dbReference>
<dbReference type="EMBL" id="AL662997">
    <property type="protein sequence ID" value="CAD40774.1"/>
    <property type="status" value="ALT_SEQ"/>
    <property type="molecule type" value="Genomic_DNA"/>
</dbReference>
<dbReference type="EMBL" id="AL731591">
    <property type="protein sequence ID" value="CAE05145.2"/>
    <property type="status" value="ALT_SEQ"/>
    <property type="molecule type" value="Genomic_DNA"/>
</dbReference>
<dbReference type="EMBL" id="AP014960">
    <property type="protein sequence ID" value="BAS89006.1"/>
    <property type="status" value="ALT_SEQ"/>
    <property type="molecule type" value="Genomic_DNA"/>
</dbReference>
<dbReference type="RefSeq" id="XP_015634456.1">
    <property type="nucleotide sequence ID" value="XM_015778970.1"/>
</dbReference>
<dbReference type="FunCoup" id="G3XKQ9">
    <property type="interactions" value="114"/>
</dbReference>
<dbReference type="STRING" id="39947.G3XKQ9"/>
<dbReference type="PaxDb" id="39947-G3XKQ9"/>
<dbReference type="EnsemblPlants" id="Os04t0396500-01">
    <property type="protein sequence ID" value="Os04t0396500-01"/>
    <property type="gene ID" value="Os04g0396500"/>
</dbReference>
<dbReference type="Gramene" id="Os04t0396500-01">
    <property type="protein sequence ID" value="Os04t0396500-01"/>
    <property type="gene ID" value="Os04g0396500"/>
</dbReference>
<dbReference type="eggNOG" id="KOG2660">
    <property type="taxonomic scope" value="Eukaryota"/>
</dbReference>
<dbReference type="HOGENOM" id="CLU_1392174_0_0_1"/>
<dbReference type="InParanoid" id="G3XKQ9"/>
<dbReference type="OrthoDB" id="1932457at2759"/>
<dbReference type="Proteomes" id="UP000000763">
    <property type="component" value="Chromosome 4"/>
</dbReference>
<dbReference type="Proteomes" id="UP000059680">
    <property type="component" value="Chromosome 4"/>
</dbReference>
<dbReference type="GO" id="GO:0005634">
    <property type="term" value="C:nucleus"/>
    <property type="evidence" value="ECO:0000314"/>
    <property type="project" value="UniProtKB"/>
</dbReference>
<dbReference type="GO" id="GO:0045893">
    <property type="term" value="P:positive regulation of DNA-templated transcription"/>
    <property type="evidence" value="ECO:0000314"/>
    <property type="project" value="UniProtKB"/>
</dbReference>
<dbReference type="GO" id="GO:2000032">
    <property type="term" value="P:regulation of secondary shoot formation"/>
    <property type="evidence" value="ECO:0000315"/>
    <property type="project" value="UniProtKB"/>
</dbReference>
<dbReference type="Gene3D" id="3.10.20.90">
    <property type="entry name" value="Phosphatidylinositol 3-kinase Catalytic Subunit, Chain A, domain 1"/>
    <property type="match status" value="1"/>
</dbReference>
<dbReference type="InterPro" id="IPR044171">
    <property type="entry name" value="LAX2-like"/>
</dbReference>
<dbReference type="PANTHER" id="PTHR47290">
    <property type="entry name" value="RING FINGER PROTEIN"/>
    <property type="match status" value="1"/>
</dbReference>
<dbReference type="PANTHER" id="PTHR47290:SF4">
    <property type="entry name" value="RING FINGER PROTEIN"/>
    <property type="match status" value="1"/>
</dbReference>
<accession>G3XKQ9</accession>
<accession>A0A0P0W9N6</accession>
<accession>A0A1U9WT22</accession>
<accession>Q7X6C5</accession>
<reference key="1">
    <citation type="journal article" date="2011" name="Plant Cell">
        <title>LAX PANICLE2 of rice encodes a novel nuclear protein and regulates the formation of axillary meristems.</title>
        <authorList>
            <person name="Tabuchi H."/>
            <person name="Zhang Y."/>
            <person name="Hattori S."/>
            <person name="Omae M."/>
            <person name="Shimizu-Sato S."/>
            <person name="Oikawa T."/>
            <person name="Qian Q."/>
            <person name="Nishimura M."/>
            <person name="Kitano H."/>
            <person name="Xie H."/>
            <person name="Fang X."/>
            <person name="Yoshida H."/>
            <person name="Kyozuka J."/>
            <person name="Chen F."/>
            <person name="Sato Y."/>
        </authorList>
    </citation>
    <scope>NUCLEOTIDE SEQUENCE [MRNA]</scope>
    <scope>FUNCTION</scope>
    <scope>INTERACTION WITH LAX1</scope>
    <scope>SUBCELLULAR LOCATION</scope>
    <scope>DISRUPTION PHENOTYPE</scope>
    <source>
        <strain>cv. Nipponbare</strain>
    </source>
</reference>
<reference key="2">
    <citation type="submission" date="2017-02" db="EMBL/GenBank/DDBJ databases">
        <title>Oryza sativa RAWUL domain protein (Gnp4) mRNA.</title>
        <authorList>
            <person name="Peterson S.W."/>
        </authorList>
    </citation>
    <scope>NUCLEOTIDE SEQUENCE [MRNA]</scope>
</reference>
<reference key="3">
    <citation type="journal article" date="2002" name="Nature">
        <title>Sequence and analysis of rice chromosome 4.</title>
        <authorList>
            <person name="Feng Q."/>
            <person name="Zhang Y."/>
            <person name="Hao P."/>
            <person name="Wang S."/>
            <person name="Fu G."/>
            <person name="Huang Y."/>
            <person name="Li Y."/>
            <person name="Zhu J."/>
            <person name="Liu Y."/>
            <person name="Hu X."/>
            <person name="Jia P."/>
            <person name="Zhang Y."/>
            <person name="Zhao Q."/>
            <person name="Ying K."/>
            <person name="Yu S."/>
            <person name="Tang Y."/>
            <person name="Weng Q."/>
            <person name="Zhang L."/>
            <person name="Lu Y."/>
            <person name="Mu J."/>
            <person name="Lu Y."/>
            <person name="Zhang L.S."/>
            <person name="Yu Z."/>
            <person name="Fan D."/>
            <person name="Liu X."/>
            <person name="Lu T."/>
            <person name="Li C."/>
            <person name="Wu Y."/>
            <person name="Sun T."/>
            <person name="Lei H."/>
            <person name="Li T."/>
            <person name="Hu H."/>
            <person name="Guan J."/>
            <person name="Wu M."/>
            <person name="Zhang R."/>
            <person name="Zhou B."/>
            <person name="Chen Z."/>
            <person name="Chen L."/>
            <person name="Jin Z."/>
            <person name="Wang R."/>
            <person name="Yin H."/>
            <person name="Cai Z."/>
            <person name="Ren S."/>
            <person name="Lv G."/>
            <person name="Gu W."/>
            <person name="Zhu G."/>
            <person name="Tu Y."/>
            <person name="Jia J."/>
            <person name="Zhang Y."/>
            <person name="Chen J."/>
            <person name="Kang H."/>
            <person name="Chen X."/>
            <person name="Shao C."/>
            <person name="Sun Y."/>
            <person name="Hu Q."/>
            <person name="Zhang X."/>
            <person name="Zhang W."/>
            <person name="Wang L."/>
            <person name="Ding C."/>
            <person name="Sheng H."/>
            <person name="Gu J."/>
            <person name="Chen S."/>
            <person name="Ni L."/>
            <person name="Zhu F."/>
            <person name="Chen W."/>
            <person name="Lan L."/>
            <person name="Lai Y."/>
            <person name="Cheng Z."/>
            <person name="Gu M."/>
            <person name="Jiang J."/>
            <person name="Li J."/>
            <person name="Hong G."/>
            <person name="Xue Y."/>
            <person name="Han B."/>
        </authorList>
    </citation>
    <scope>NUCLEOTIDE SEQUENCE [LARGE SCALE GENOMIC DNA]</scope>
    <source>
        <strain>cv. Nipponbare</strain>
    </source>
</reference>
<reference key="4">
    <citation type="journal article" date="2005" name="Nature">
        <title>The map-based sequence of the rice genome.</title>
        <authorList>
            <consortium name="International rice genome sequencing project (IRGSP)"/>
        </authorList>
    </citation>
    <scope>NUCLEOTIDE SEQUENCE [LARGE SCALE GENOMIC DNA]</scope>
    <source>
        <strain>cv. Nipponbare</strain>
    </source>
</reference>
<reference key="5">
    <citation type="journal article" date="2013" name="Rice">
        <title>Improvement of the Oryza sativa Nipponbare reference genome using next generation sequence and optical map data.</title>
        <authorList>
            <person name="Kawahara Y."/>
            <person name="de la Bastide M."/>
            <person name="Hamilton J.P."/>
            <person name="Kanamori H."/>
            <person name="McCombie W.R."/>
            <person name="Ouyang S."/>
            <person name="Schwartz D.C."/>
            <person name="Tanaka T."/>
            <person name="Wu J."/>
            <person name="Zhou S."/>
            <person name="Childs K.L."/>
            <person name="Davidson R.M."/>
            <person name="Lin H."/>
            <person name="Quesada-Ocampo L."/>
            <person name="Vaillancourt B."/>
            <person name="Sakai H."/>
            <person name="Lee S.S."/>
            <person name="Kim J."/>
            <person name="Numa H."/>
            <person name="Itoh T."/>
            <person name="Buell C.R."/>
            <person name="Matsumoto T."/>
        </authorList>
    </citation>
    <scope>GENOME REANNOTATION</scope>
    <source>
        <strain>cv. Nipponbare</strain>
    </source>
</reference>
<protein>
    <recommendedName>
        <fullName evidence="3">Protein LAX PANICLE 2</fullName>
    </recommendedName>
</protein>
<feature type="chain" id="PRO_0000441776" description="Protein LAX PANICLE 2">
    <location>
        <begin position="1"/>
        <end position="394"/>
    </location>
</feature>
<feature type="region of interest" description="Disordered" evidence="1">
    <location>
        <begin position="1"/>
        <end position="193"/>
    </location>
</feature>
<feature type="compositionally biased region" description="Basic residues" evidence="1">
    <location>
        <begin position="8"/>
        <end position="20"/>
    </location>
</feature>
<feature type="compositionally biased region" description="Basic and acidic residues" evidence="1">
    <location>
        <begin position="60"/>
        <end position="84"/>
    </location>
</feature>
<feature type="compositionally biased region" description="Low complexity" evidence="1">
    <location>
        <begin position="90"/>
        <end position="101"/>
    </location>
</feature>
<feature type="compositionally biased region" description="Low complexity" evidence="1">
    <location>
        <begin position="119"/>
        <end position="131"/>
    </location>
</feature>
<feature type="compositionally biased region" description="Low complexity" evidence="1">
    <location>
        <begin position="146"/>
        <end position="155"/>
    </location>
</feature>
<feature type="compositionally biased region" description="Pro residues" evidence="1">
    <location>
        <begin position="170"/>
        <end position="185"/>
    </location>
</feature>
<organism>
    <name type="scientific">Oryza sativa subsp. japonica</name>
    <name type="common">Rice</name>
    <dbReference type="NCBI Taxonomy" id="39947"/>
    <lineage>
        <taxon>Eukaryota</taxon>
        <taxon>Viridiplantae</taxon>
        <taxon>Streptophyta</taxon>
        <taxon>Embryophyta</taxon>
        <taxon>Tracheophyta</taxon>
        <taxon>Spermatophyta</taxon>
        <taxon>Magnoliopsida</taxon>
        <taxon>Liliopsida</taxon>
        <taxon>Poales</taxon>
        <taxon>Poaceae</taxon>
        <taxon>BOP clade</taxon>
        <taxon>Oryzoideae</taxon>
        <taxon>Oryzeae</taxon>
        <taxon>Oryzinae</taxon>
        <taxon>Oryza</taxon>
        <taxon>Oryza sativa</taxon>
    </lineage>
</organism>
<keyword id="KW-0217">Developmental protein</keyword>
<keyword id="KW-0539">Nucleus</keyword>
<keyword id="KW-1185">Reference proteome</keyword>
<sequence>MVPARSLAHPHPHLVRRRRDHAAAAHGATARCDDDDDGVVTPRGPTRYMAQEPINHHQHQHDPPKQPPPREADDDHHRIQEREPLPPPTTTTRNQRLQLQLGGDGHHNHHHHHHQEVAGTSGSSSGGSSSNNGGGGTRDWLRLATGPASPGASAGSDHDLFPSTTTTAPAPQPPTPTPTPTPTPTPRHHHHDVLVLPGMPPPGSFLRPGPAMPGIPQASIPTHMLRAAPPWLPPWSPVAAPPPLLPFPHQHRAFYAAPPTTTPPASSGFDAIRVVLPPSAVAAAAGVWFVLQAAPLQGREPFLPQIPRSYLRIKDGRVTVRLLTKYLVNKLGLEDESEVEITCRGRQLLPILTLQHVRDSIWCRRDAVSPSAAPDIPTADHHQHIMVLQYGRRP</sequence>
<comment type="function">
    <text evidence="2">Involved in the regulation of shoot branching by controlling axillary meristem (AM) formation. Functions in association with LAX1 to regulate the process of AM formation. Possesses transactivation activity in yeast.</text>
</comment>
<comment type="subunit">
    <text evidence="2">Interacts with LAX1.</text>
</comment>
<comment type="subcellular location">
    <subcellularLocation>
        <location evidence="2">Nucleus</location>
    </subcellularLocation>
</comment>
<comment type="disruption phenotype">
    <text evidence="2">Absence of axillary meristem (AM) in most of the lateral branching of the panicle, and reduced number of AMs at the vegetative stage.</text>
</comment>
<comment type="sequence caution" evidence="4">
    <conflict type="erroneous gene model prediction">
        <sequence resource="EMBL-CDS" id="BAS89006"/>
    </conflict>
</comment>
<comment type="sequence caution" evidence="4">
    <conflict type="erroneous gene model prediction">
        <sequence resource="EMBL-CDS" id="CAD40774"/>
    </conflict>
</comment>
<comment type="sequence caution" evidence="4">
    <conflict type="erroneous gene model prediction">
        <sequence resource="EMBL-CDS" id="CAE05145"/>
    </conflict>
</comment>
<name>LAX2_ORYSJ</name>
<gene>
    <name evidence="3" type="primary">LAX2</name>
    <name evidence="5" type="synonym">GNP4</name>
    <name evidence="6" type="ordered locus">Os04g0396500</name>
    <name evidence="4" type="ordered locus">LOC_Os04g32510</name>
    <name evidence="8" type="ORF">OSJNBa0039C07.1</name>
    <name evidence="7" type="ORF">OSJNBb0039F02.5</name>
</gene>